<gene>
    <name evidence="1" type="primary">cynS</name>
    <name type="ordered locus">Mvan_2755</name>
</gene>
<keyword id="KW-0456">Lyase</keyword>
<proteinExistence type="inferred from homology"/>
<organism>
    <name type="scientific">Mycolicibacterium vanbaalenii (strain DSM 7251 / JCM 13017 / BCRC 16820 / KCTC 9966 / NRRL B-24157 / PYR-1)</name>
    <name type="common">Mycobacterium vanbaalenii</name>
    <dbReference type="NCBI Taxonomy" id="350058"/>
    <lineage>
        <taxon>Bacteria</taxon>
        <taxon>Bacillati</taxon>
        <taxon>Actinomycetota</taxon>
        <taxon>Actinomycetes</taxon>
        <taxon>Mycobacteriales</taxon>
        <taxon>Mycobacteriaceae</taxon>
        <taxon>Mycolicibacterium</taxon>
    </lineage>
</organism>
<evidence type="ECO:0000255" key="1">
    <source>
        <dbReference type="HAMAP-Rule" id="MF_00535"/>
    </source>
</evidence>
<reference key="1">
    <citation type="submission" date="2006-12" db="EMBL/GenBank/DDBJ databases">
        <title>Complete sequence of Mycobacterium vanbaalenii PYR-1.</title>
        <authorList>
            <consortium name="US DOE Joint Genome Institute"/>
            <person name="Copeland A."/>
            <person name="Lucas S."/>
            <person name="Lapidus A."/>
            <person name="Barry K."/>
            <person name="Detter J.C."/>
            <person name="Glavina del Rio T."/>
            <person name="Hammon N."/>
            <person name="Israni S."/>
            <person name="Dalin E."/>
            <person name="Tice H."/>
            <person name="Pitluck S."/>
            <person name="Singan V."/>
            <person name="Schmutz J."/>
            <person name="Larimer F."/>
            <person name="Land M."/>
            <person name="Hauser L."/>
            <person name="Kyrpides N."/>
            <person name="Anderson I.J."/>
            <person name="Miller C."/>
            <person name="Richardson P."/>
        </authorList>
    </citation>
    <scope>NUCLEOTIDE SEQUENCE [LARGE SCALE GENOMIC DNA]</scope>
    <source>
        <strain>DSM 7251 / JCM 13017 / BCRC 16820 / KCTC 9966 / NRRL B-24157 / PYR-1</strain>
    </source>
</reference>
<sequence>MTREDATAEILAARLARGLSWQQLAEAIDRPLVWTISALLGQHPVPVESAEILVELLGLDQSAVPVLAAVPMRGGLPTAVPTDPTIYRFYEVLQVYGGAIKELIHEEFGDGIMSAINFSVDVERKPHPDGDRVVVTFDGKFLPYAWTAADGRR</sequence>
<dbReference type="EC" id="4.2.1.104" evidence="1"/>
<dbReference type="EMBL" id="CP000511">
    <property type="protein sequence ID" value="ABM13562.1"/>
    <property type="molecule type" value="Genomic_DNA"/>
</dbReference>
<dbReference type="RefSeq" id="WP_011779970.1">
    <property type="nucleotide sequence ID" value="NZ_JACKSD010000326.1"/>
</dbReference>
<dbReference type="SMR" id="A1T8R2"/>
<dbReference type="STRING" id="350058.Mvan_2755"/>
<dbReference type="KEGG" id="mva:Mvan_2755"/>
<dbReference type="eggNOG" id="COG1513">
    <property type="taxonomic scope" value="Bacteria"/>
</dbReference>
<dbReference type="HOGENOM" id="CLU_103452_1_0_11"/>
<dbReference type="Proteomes" id="UP000009159">
    <property type="component" value="Chromosome"/>
</dbReference>
<dbReference type="GO" id="GO:0008824">
    <property type="term" value="F:cyanate hydratase activity"/>
    <property type="evidence" value="ECO:0007669"/>
    <property type="project" value="UniProtKB-UniRule"/>
</dbReference>
<dbReference type="GO" id="GO:0003677">
    <property type="term" value="F:DNA binding"/>
    <property type="evidence" value="ECO:0007669"/>
    <property type="project" value="InterPro"/>
</dbReference>
<dbReference type="GO" id="GO:0009439">
    <property type="term" value="P:cyanate metabolic process"/>
    <property type="evidence" value="ECO:0007669"/>
    <property type="project" value="UniProtKB-UniRule"/>
</dbReference>
<dbReference type="CDD" id="cd00559">
    <property type="entry name" value="Cyanase_C"/>
    <property type="match status" value="1"/>
</dbReference>
<dbReference type="Gene3D" id="3.30.1160.10">
    <property type="entry name" value="Cyanate lyase, C-terminal domain"/>
    <property type="match status" value="1"/>
</dbReference>
<dbReference type="Gene3D" id="1.10.260.40">
    <property type="entry name" value="lambda repressor-like DNA-binding domains"/>
    <property type="match status" value="1"/>
</dbReference>
<dbReference type="HAMAP" id="MF_00535">
    <property type="entry name" value="Cyanate_hydrat"/>
    <property type="match status" value="1"/>
</dbReference>
<dbReference type="InterPro" id="IPR008076">
    <property type="entry name" value="Cyanase"/>
</dbReference>
<dbReference type="InterPro" id="IPR003712">
    <property type="entry name" value="Cyanate_lyase_C"/>
</dbReference>
<dbReference type="InterPro" id="IPR036581">
    <property type="entry name" value="Cyanate_lyase_C_sf"/>
</dbReference>
<dbReference type="InterPro" id="IPR048564">
    <property type="entry name" value="CYNS_N"/>
</dbReference>
<dbReference type="InterPro" id="IPR010982">
    <property type="entry name" value="Lambda_DNA-bd_dom_sf"/>
</dbReference>
<dbReference type="NCBIfam" id="TIGR00673">
    <property type="entry name" value="cynS"/>
    <property type="match status" value="1"/>
</dbReference>
<dbReference type="NCBIfam" id="NF002773">
    <property type="entry name" value="PRK02866.1"/>
    <property type="match status" value="1"/>
</dbReference>
<dbReference type="PANTHER" id="PTHR34186">
    <property type="entry name" value="CYANATE HYDRATASE"/>
    <property type="match status" value="1"/>
</dbReference>
<dbReference type="PANTHER" id="PTHR34186:SF2">
    <property type="entry name" value="CYANATE HYDRATASE"/>
    <property type="match status" value="1"/>
</dbReference>
<dbReference type="Pfam" id="PF02560">
    <property type="entry name" value="Cyanate_lyase"/>
    <property type="match status" value="1"/>
</dbReference>
<dbReference type="Pfam" id="PF21291">
    <property type="entry name" value="CYNS_N"/>
    <property type="match status" value="1"/>
</dbReference>
<dbReference type="PIRSF" id="PIRSF001263">
    <property type="entry name" value="Cyanate_hydratas"/>
    <property type="match status" value="1"/>
</dbReference>
<dbReference type="PRINTS" id="PR01693">
    <property type="entry name" value="CYANASE"/>
</dbReference>
<dbReference type="SMART" id="SM01116">
    <property type="entry name" value="Cyanate_lyase"/>
    <property type="match status" value="1"/>
</dbReference>
<dbReference type="SUPFAM" id="SSF55234">
    <property type="entry name" value="Cyanase C-terminal domain"/>
    <property type="match status" value="1"/>
</dbReference>
<dbReference type="SUPFAM" id="SSF47413">
    <property type="entry name" value="lambda repressor-like DNA-binding domains"/>
    <property type="match status" value="1"/>
</dbReference>
<accession>A1T8R2</accession>
<name>CYNS_MYCVP</name>
<protein>
    <recommendedName>
        <fullName evidence="1">Cyanate hydratase</fullName>
        <shortName evidence="1">Cyanase</shortName>
        <ecNumber evidence="1">4.2.1.104</ecNumber>
    </recommendedName>
    <alternativeName>
        <fullName evidence="1">Cyanate hydrolase</fullName>
    </alternativeName>
    <alternativeName>
        <fullName evidence="1">Cyanate lyase</fullName>
    </alternativeName>
</protein>
<comment type="function">
    <text evidence="1">Catalyzes the reaction of cyanate with bicarbonate to produce ammonia and carbon dioxide.</text>
</comment>
<comment type="catalytic activity">
    <reaction evidence="1">
        <text>cyanate + hydrogencarbonate + 3 H(+) = NH4(+) + 2 CO2</text>
        <dbReference type="Rhea" id="RHEA:11120"/>
        <dbReference type="ChEBI" id="CHEBI:15378"/>
        <dbReference type="ChEBI" id="CHEBI:16526"/>
        <dbReference type="ChEBI" id="CHEBI:17544"/>
        <dbReference type="ChEBI" id="CHEBI:28938"/>
        <dbReference type="ChEBI" id="CHEBI:29195"/>
        <dbReference type="EC" id="4.2.1.104"/>
    </reaction>
</comment>
<comment type="similarity">
    <text evidence="1">Belongs to the cyanase family.</text>
</comment>
<feature type="chain" id="PRO_1000051478" description="Cyanate hydratase">
    <location>
        <begin position="1"/>
        <end position="153"/>
    </location>
</feature>
<feature type="active site" evidence="1">
    <location>
        <position position="88"/>
    </location>
</feature>
<feature type="active site" evidence="1">
    <location>
        <position position="91"/>
    </location>
</feature>
<feature type="active site" evidence="1">
    <location>
        <position position="114"/>
    </location>
</feature>